<evidence type="ECO:0000255" key="1">
    <source>
        <dbReference type="HAMAP-Rule" id="MF_00206"/>
    </source>
</evidence>
<evidence type="ECO:0000255" key="2">
    <source>
        <dbReference type="PROSITE-ProRule" id="PRU01266"/>
    </source>
</evidence>
<evidence type="ECO:0000305" key="3"/>
<comment type="function">
    <text evidence="1">Catalyzes the radical-mediated insertion of two sulfur atoms into the C-6 and C-8 positions of the octanoyl moiety bound to the lipoyl domains of lipoate-dependent enzymes, thereby converting the octanoylated domains into lipoylated derivatives.</text>
</comment>
<comment type="catalytic activity">
    <reaction evidence="1">
        <text>[[Fe-S] cluster scaffold protein carrying a second [4Fe-4S](2+) cluster] + N(6)-octanoyl-L-lysyl-[protein] + 2 oxidized [2Fe-2S]-[ferredoxin] + 2 S-adenosyl-L-methionine + 4 H(+) = [[Fe-S] cluster scaffold protein] + N(6)-[(R)-dihydrolipoyl]-L-lysyl-[protein] + 4 Fe(3+) + 2 hydrogen sulfide + 2 5'-deoxyadenosine + 2 L-methionine + 2 reduced [2Fe-2S]-[ferredoxin]</text>
        <dbReference type="Rhea" id="RHEA:16585"/>
        <dbReference type="Rhea" id="RHEA-COMP:9928"/>
        <dbReference type="Rhea" id="RHEA-COMP:10000"/>
        <dbReference type="Rhea" id="RHEA-COMP:10001"/>
        <dbReference type="Rhea" id="RHEA-COMP:10475"/>
        <dbReference type="Rhea" id="RHEA-COMP:14568"/>
        <dbReference type="Rhea" id="RHEA-COMP:14569"/>
        <dbReference type="ChEBI" id="CHEBI:15378"/>
        <dbReference type="ChEBI" id="CHEBI:17319"/>
        <dbReference type="ChEBI" id="CHEBI:29034"/>
        <dbReference type="ChEBI" id="CHEBI:29919"/>
        <dbReference type="ChEBI" id="CHEBI:33722"/>
        <dbReference type="ChEBI" id="CHEBI:33737"/>
        <dbReference type="ChEBI" id="CHEBI:33738"/>
        <dbReference type="ChEBI" id="CHEBI:57844"/>
        <dbReference type="ChEBI" id="CHEBI:59789"/>
        <dbReference type="ChEBI" id="CHEBI:78809"/>
        <dbReference type="ChEBI" id="CHEBI:83100"/>
        <dbReference type="EC" id="2.8.1.8"/>
    </reaction>
</comment>
<comment type="cofactor">
    <cofactor evidence="1">
        <name>[4Fe-4S] cluster</name>
        <dbReference type="ChEBI" id="CHEBI:49883"/>
    </cofactor>
    <text evidence="1">Binds 2 [4Fe-4S] clusters per subunit. One cluster is coordinated with 3 cysteines and an exchangeable S-adenosyl-L-methionine.</text>
</comment>
<comment type="pathway">
    <text evidence="1">Protein modification; protein lipoylation via endogenous pathway; protein N(6)-(lipoyl)lysine from octanoyl-[acyl-carrier-protein]: step 2/2.</text>
</comment>
<comment type="subcellular location">
    <subcellularLocation>
        <location evidence="1">Cytoplasm</location>
    </subcellularLocation>
</comment>
<comment type="similarity">
    <text evidence="1">Belongs to the radical SAM superfamily. Lipoyl synthase family.</text>
</comment>
<comment type="sequence caution" evidence="3">
    <conflict type="erroneous initiation">
        <sequence resource="EMBL-CDS" id="ABB28330"/>
    </conflict>
</comment>
<dbReference type="EC" id="2.8.1.8" evidence="1"/>
<dbReference type="EMBL" id="CP000108">
    <property type="protein sequence ID" value="ABB28330.1"/>
    <property type="status" value="ALT_INIT"/>
    <property type="molecule type" value="Genomic_DNA"/>
</dbReference>
<dbReference type="SMR" id="Q3ARP5"/>
<dbReference type="STRING" id="340177.Cag_1068"/>
<dbReference type="KEGG" id="cch:Cag_1068"/>
<dbReference type="eggNOG" id="COG0320">
    <property type="taxonomic scope" value="Bacteria"/>
</dbReference>
<dbReference type="HOGENOM" id="CLU_033144_2_0_10"/>
<dbReference type="UniPathway" id="UPA00538">
    <property type="reaction ID" value="UER00593"/>
</dbReference>
<dbReference type="GO" id="GO:0005737">
    <property type="term" value="C:cytoplasm"/>
    <property type="evidence" value="ECO:0007669"/>
    <property type="project" value="UniProtKB-SubCell"/>
</dbReference>
<dbReference type="GO" id="GO:0051539">
    <property type="term" value="F:4 iron, 4 sulfur cluster binding"/>
    <property type="evidence" value="ECO:0007669"/>
    <property type="project" value="UniProtKB-UniRule"/>
</dbReference>
<dbReference type="GO" id="GO:0016992">
    <property type="term" value="F:lipoate synthase activity"/>
    <property type="evidence" value="ECO:0007669"/>
    <property type="project" value="UniProtKB-UniRule"/>
</dbReference>
<dbReference type="GO" id="GO:0046872">
    <property type="term" value="F:metal ion binding"/>
    <property type="evidence" value="ECO:0007669"/>
    <property type="project" value="UniProtKB-KW"/>
</dbReference>
<dbReference type="FunFam" id="3.20.20.70:FF:000040">
    <property type="entry name" value="Lipoyl synthase"/>
    <property type="match status" value="1"/>
</dbReference>
<dbReference type="Gene3D" id="3.20.20.70">
    <property type="entry name" value="Aldolase class I"/>
    <property type="match status" value="1"/>
</dbReference>
<dbReference type="HAMAP" id="MF_00206">
    <property type="entry name" value="Lipoyl_synth"/>
    <property type="match status" value="1"/>
</dbReference>
<dbReference type="InterPro" id="IPR013785">
    <property type="entry name" value="Aldolase_TIM"/>
</dbReference>
<dbReference type="InterPro" id="IPR006638">
    <property type="entry name" value="Elp3/MiaA/NifB-like_rSAM"/>
</dbReference>
<dbReference type="InterPro" id="IPR003698">
    <property type="entry name" value="Lipoyl_synth"/>
</dbReference>
<dbReference type="InterPro" id="IPR007197">
    <property type="entry name" value="rSAM"/>
</dbReference>
<dbReference type="NCBIfam" id="TIGR00510">
    <property type="entry name" value="lipA"/>
    <property type="match status" value="1"/>
</dbReference>
<dbReference type="NCBIfam" id="NF004019">
    <property type="entry name" value="PRK05481.1"/>
    <property type="match status" value="1"/>
</dbReference>
<dbReference type="NCBIfam" id="NF009544">
    <property type="entry name" value="PRK12928.1"/>
    <property type="match status" value="1"/>
</dbReference>
<dbReference type="PANTHER" id="PTHR10949">
    <property type="entry name" value="LIPOYL SYNTHASE"/>
    <property type="match status" value="1"/>
</dbReference>
<dbReference type="PANTHER" id="PTHR10949:SF0">
    <property type="entry name" value="LIPOYL SYNTHASE, MITOCHONDRIAL"/>
    <property type="match status" value="1"/>
</dbReference>
<dbReference type="Pfam" id="PF04055">
    <property type="entry name" value="Radical_SAM"/>
    <property type="match status" value="1"/>
</dbReference>
<dbReference type="PIRSF" id="PIRSF005963">
    <property type="entry name" value="Lipoyl_synth"/>
    <property type="match status" value="1"/>
</dbReference>
<dbReference type="SFLD" id="SFLDF00271">
    <property type="entry name" value="lipoyl_synthase"/>
    <property type="match status" value="1"/>
</dbReference>
<dbReference type="SFLD" id="SFLDG01058">
    <property type="entry name" value="lipoyl_synthase_like"/>
    <property type="match status" value="1"/>
</dbReference>
<dbReference type="SMART" id="SM00729">
    <property type="entry name" value="Elp3"/>
    <property type="match status" value="1"/>
</dbReference>
<dbReference type="SUPFAM" id="SSF102114">
    <property type="entry name" value="Radical SAM enzymes"/>
    <property type="match status" value="1"/>
</dbReference>
<dbReference type="PROSITE" id="PS51918">
    <property type="entry name" value="RADICAL_SAM"/>
    <property type="match status" value="1"/>
</dbReference>
<sequence length="293" mass="32183">MAQPIGRKPEWLKIKMASGASFAATRQLLNRHSLHTVCRSALCPNLQECWSRGTATFLLLGNTCTRSCTFCAVSKASAPPAPDSDEPQKIAEAIASMKLKHAVLTSVTRDDLPDGGANHWIATMQAIRQRTPNVSLECLIPDFQHKKAALDSVMQATPDVLNHNIESVPSLYSTVRPQANYRASLELLRYAKEQHGLATKSGLMVGMGEERHEVEATLHDLAAHGCDMVTIGQYLQPSAAHLPVARYVPPQEFEEYSTIAKNAGIRYVHAAPFVRSSYHAETFPNNLTITQNL</sequence>
<keyword id="KW-0004">4Fe-4S</keyword>
<keyword id="KW-0963">Cytoplasm</keyword>
<keyword id="KW-0408">Iron</keyword>
<keyword id="KW-0411">Iron-sulfur</keyword>
<keyword id="KW-0479">Metal-binding</keyword>
<keyword id="KW-0949">S-adenosyl-L-methionine</keyword>
<keyword id="KW-0808">Transferase</keyword>
<name>LIPA_CHLCH</name>
<protein>
    <recommendedName>
        <fullName evidence="1">Lipoyl synthase</fullName>
        <ecNumber evidence="1">2.8.1.8</ecNumber>
    </recommendedName>
    <alternativeName>
        <fullName evidence="1">Lip-syn</fullName>
        <shortName evidence="1">LS</shortName>
    </alternativeName>
    <alternativeName>
        <fullName evidence="1">Lipoate synthase</fullName>
    </alternativeName>
    <alternativeName>
        <fullName evidence="1">Lipoic acid synthase</fullName>
    </alternativeName>
    <alternativeName>
        <fullName evidence="1">Sulfur insertion protein LipA</fullName>
    </alternativeName>
</protein>
<feature type="chain" id="PRO_0000325238" description="Lipoyl synthase">
    <location>
        <begin position="1"/>
        <end position="293"/>
    </location>
</feature>
<feature type="domain" description="Radical SAM core" evidence="2">
    <location>
        <begin position="50"/>
        <end position="266"/>
    </location>
</feature>
<feature type="binding site" evidence="1">
    <location>
        <position position="38"/>
    </location>
    <ligand>
        <name>[4Fe-4S] cluster</name>
        <dbReference type="ChEBI" id="CHEBI:49883"/>
        <label>1</label>
    </ligand>
</feature>
<feature type="binding site" evidence="1">
    <location>
        <position position="43"/>
    </location>
    <ligand>
        <name>[4Fe-4S] cluster</name>
        <dbReference type="ChEBI" id="CHEBI:49883"/>
        <label>1</label>
    </ligand>
</feature>
<feature type="binding site" evidence="1">
    <location>
        <position position="49"/>
    </location>
    <ligand>
        <name>[4Fe-4S] cluster</name>
        <dbReference type="ChEBI" id="CHEBI:49883"/>
        <label>1</label>
    </ligand>
</feature>
<feature type="binding site" evidence="1">
    <location>
        <position position="64"/>
    </location>
    <ligand>
        <name>[4Fe-4S] cluster</name>
        <dbReference type="ChEBI" id="CHEBI:49883"/>
        <label>2</label>
        <note>4Fe-4S-S-AdoMet</note>
    </ligand>
</feature>
<feature type="binding site" evidence="1">
    <location>
        <position position="68"/>
    </location>
    <ligand>
        <name>[4Fe-4S] cluster</name>
        <dbReference type="ChEBI" id="CHEBI:49883"/>
        <label>2</label>
        <note>4Fe-4S-S-AdoMet</note>
    </ligand>
</feature>
<feature type="binding site" evidence="1">
    <location>
        <position position="71"/>
    </location>
    <ligand>
        <name>[4Fe-4S] cluster</name>
        <dbReference type="ChEBI" id="CHEBI:49883"/>
        <label>2</label>
        <note>4Fe-4S-S-AdoMet</note>
    </ligand>
</feature>
<feature type="binding site" evidence="1">
    <location>
        <position position="277"/>
    </location>
    <ligand>
        <name>[4Fe-4S] cluster</name>
        <dbReference type="ChEBI" id="CHEBI:49883"/>
        <label>1</label>
    </ligand>
</feature>
<accession>Q3ARP5</accession>
<gene>
    <name evidence="1" type="primary">lipA</name>
    <name type="ordered locus">Cag_1068</name>
</gene>
<proteinExistence type="inferred from homology"/>
<reference key="1">
    <citation type="submission" date="2005-08" db="EMBL/GenBank/DDBJ databases">
        <title>Complete sequence of Chlorobium chlorochromatii CaD3.</title>
        <authorList>
            <consortium name="US DOE Joint Genome Institute"/>
            <person name="Copeland A."/>
            <person name="Lucas S."/>
            <person name="Lapidus A."/>
            <person name="Barry K."/>
            <person name="Detter J.C."/>
            <person name="Glavina T."/>
            <person name="Hammon N."/>
            <person name="Israni S."/>
            <person name="Pitluck S."/>
            <person name="Bryant D."/>
            <person name="Schmutz J."/>
            <person name="Larimer F."/>
            <person name="Land M."/>
            <person name="Kyrpides N."/>
            <person name="Ivanova N."/>
            <person name="Richardson P."/>
        </authorList>
    </citation>
    <scope>NUCLEOTIDE SEQUENCE [LARGE SCALE GENOMIC DNA]</scope>
    <source>
        <strain>CaD3</strain>
    </source>
</reference>
<organism>
    <name type="scientific">Chlorobium chlorochromatii (strain CaD3)</name>
    <dbReference type="NCBI Taxonomy" id="340177"/>
    <lineage>
        <taxon>Bacteria</taxon>
        <taxon>Pseudomonadati</taxon>
        <taxon>Chlorobiota</taxon>
        <taxon>Chlorobiia</taxon>
        <taxon>Chlorobiales</taxon>
        <taxon>Chlorobiaceae</taxon>
        <taxon>Chlorobium/Pelodictyon group</taxon>
        <taxon>Chlorobium</taxon>
    </lineage>
</organism>